<name>CR34_RANCA</name>
<reference key="1">
    <citation type="journal article" date="1993" name="J. Chem. Res.">
        <title>Peptides from Australian frogs. The structures of the caerins from Litoria caerula.</title>
        <authorList>
            <person name="Stone D.J.M."/>
            <person name="Waugh R.J."/>
            <person name="Bowie J.H."/>
            <person name="Wallace J.C."/>
            <person name="Tyler M.J."/>
        </authorList>
    </citation>
    <scope>PROTEIN SEQUENCE</scope>
    <scope>AMIDATION AT LYS-22</scope>
    <scope>MASS SPECTROMETRY</scope>
    <source>
        <tissue>Parotoid gland</tissue>
    </source>
</reference>
<feature type="peptide" id="PRO_0000043751" description="Caerin-3.4">
    <location>
        <begin position="1"/>
        <end position="22"/>
    </location>
</feature>
<feature type="modified residue" description="Lysine amide" evidence="1">
    <location>
        <position position="22"/>
    </location>
</feature>
<sequence length="22" mass="2455">GLWEKIREKANELVSGIVEGVK</sequence>
<organism>
    <name type="scientific">Ranoidea caerulea</name>
    <name type="common">Green tree frog</name>
    <name type="synonym">Litoria caerulea</name>
    <dbReference type="NCBI Taxonomy" id="30344"/>
    <lineage>
        <taxon>Eukaryota</taxon>
        <taxon>Metazoa</taxon>
        <taxon>Chordata</taxon>
        <taxon>Craniata</taxon>
        <taxon>Vertebrata</taxon>
        <taxon>Euteleostomi</taxon>
        <taxon>Amphibia</taxon>
        <taxon>Batrachia</taxon>
        <taxon>Anura</taxon>
        <taxon>Neobatrachia</taxon>
        <taxon>Hyloidea</taxon>
        <taxon>Hylidae</taxon>
        <taxon>Pelodryadinae</taxon>
        <taxon>Ranoidea</taxon>
    </lineage>
</organism>
<keyword id="KW-0027">Amidation</keyword>
<keyword id="KW-0878">Amphibian defense peptide</keyword>
<keyword id="KW-0044">Antibiotic</keyword>
<keyword id="KW-0929">Antimicrobial</keyword>
<keyword id="KW-0903">Direct protein sequencing</keyword>
<keyword id="KW-0964">Secreted</keyword>
<proteinExistence type="evidence at protein level"/>
<comment type="function">
    <text>Antibacterial peptide, that adopts an alpha helical conformation which can disrupt bacterial membranes. Each caerin displays a different antimicrobial specificity.</text>
</comment>
<comment type="subcellular location">
    <subcellularLocation>
        <location>Secreted</location>
    </subcellularLocation>
</comment>
<comment type="tissue specificity">
    <text>Expressed by the skin parotoid and/or rostral glands.</text>
</comment>
<comment type="mass spectrometry" mass="2452.0" method="FAB" evidence="1"/>
<comment type="similarity">
    <text evidence="2">Belongs to the frog skin active peptide (FSAP) family. Caerin subfamily.</text>
</comment>
<evidence type="ECO:0000269" key="1">
    <source ref="1"/>
</evidence>
<evidence type="ECO:0000305" key="2"/>
<dbReference type="GO" id="GO:0005576">
    <property type="term" value="C:extracellular region"/>
    <property type="evidence" value="ECO:0007669"/>
    <property type="project" value="UniProtKB-SubCell"/>
</dbReference>
<dbReference type="GO" id="GO:0042742">
    <property type="term" value="P:defense response to bacterium"/>
    <property type="evidence" value="ECO:0007669"/>
    <property type="project" value="UniProtKB-KW"/>
</dbReference>
<protein>
    <recommendedName>
        <fullName>Caerin-3.4</fullName>
    </recommendedName>
</protein>
<accession>P56241</accession>